<protein>
    <recommendedName>
        <fullName evidence="2">Large ribosomal subunit protein bL12</fullName>
    </recommendedName>
    <alternativeName>
        <fullName evidence="3">50S ribosomal protein L7/L12</fullName>
    </alternativeName>
</protein>
<name>RL7_NEIMA</name>
<sequence>MAITKEDILEAVGSLTVMELNDLVKAFEEKFGVSAAAVAVAGPAGAGAADAEEKTEFDVVLASAGDQKVGVIKVVRAITGLGLKEAKDIVDGAPKTIKEGVSKAEAEDIQKQLEEAGAKVEIK</sequence>
<proteinExistence type="inferred from homology"/>
<feature type="initiator methionine" description="Removed" evidence="1">
    <location>
        <position position="1"/>
    </location>
</feature>
<feature type="chain" id="PRO_0000157556" description="Large ribosomal subunit protein bL12">
    <location>
        <begin position="2"/>
        <end position="123"/>
    </location>
</feature>
<keyword id="KW-0687">Ribonucleoprotein</keyword>
<keyword id="KW-0689">Ribosomal protein</keyword>
<accession>P0A0X0</accession>
<accession>A1IP04</accession>
<accession>P80716</accession>
<comment type="function">
    <text evidence="2">Forms part of the ribosomal stalk which helps the ribosome interact with GTP-bound translation factors. Is thus essential for accurate translation.</text>
</comment>
<comment type="subunit">
    <text evidence="2">Homodimer. Part of the ribosomal stalk of the 50S ribosomal subunit. Forms a multimeric L10(L12)X complex, where L10 forms an elongated spine to which 2 to 4 L12 dimers bind in a sequential fashion. Binds GTP-bound translation factors.</text>
</comment>
<comment type="similarity">
    <text evidence="2">Belongs to the bacterial ribosomal protein bL12 family.</text>
</comment>
<evidence type="ECO:0000250" key="1"/>
<evidence type="ECO:0000255" key="2">
    <source>
        <dbReference type="HAMAP-Rule" id="MF_00368"/>
    </source>
</evidence>
<evidence type="ECO:0000305" key="3"/>
<dbReference type="EMBL" id="AL157959">
    <property type="protein sequence ID" value="CAM07461.1"/>
    <property type="molecule type" value="Genomic_DNA"/>
</dbReference>
<dbReference type="RefSeq" id="WP_002215374.1">
    <property type="nucleotide sequence ID" value="NC_003116.1"/>
</dbReference>
<dbReference type="SMR" id="P0A0X0"/>
<dbReference type="EnsemblBacteria" id="CAM07461">
    <property type="protein sequence ID" value="CAM07461"/>
    <property type="gene ID" value="NMA0143"/>
</dbReference>
<dbReference type="GeneID" id="93387206"/>
<dbReference type="KEGG" id="nma:NMA0143"/>
<dbReference type="HOGENOM" id="CLU_086499_3_2_4"/>
<dbReference type="Proteomes" id="UP000000626">
    <property type="component" value="Chromosome"/>
</dbReference>
<dbReference type="GO" id="GO:0022625">
    <property type="term" value="C:cytosolic large ribosomal subunit"/>
    <property type="evidence" value="ECO:0007669"/>
    <property type="project" value="TreeGrafter"/>
</dbReference>
<dbReference type="GO" id="GO:0003729">
    <property type="term" value="F:mRNA binding"/>
    <property type="evidence" value="ECO:0007669"/>
    <property type="project" value="TreeGrafter"/>
</dbReference>
<dbReference type="GO" id="GO:0003735">
    <property type="term" value="F:structural constituent of ribosome"/>
    <property type="evidence" value="ECO:0007669"/>
    <property type="project" value="InterPro"/>
</dbReference>
<dbReference type="GO" id="GO:0006412">
    <property type="term" value="P:translation"/>
    <property type="evidence" value="ECO:0007669"/>
    <property type="project" value="UniProtKB-UniRule"/>
</dbReference>
<dbReference type="CDD" id="cd00387">
    <property type="entry name" value="Ribosomal_L7_L12"/>
    <property type="match status" value="1"/>
</dbReference>
<dbReference type="FunFam" id="1.20.5.710:FF:000003">
    <property type="entry name" value="50S ribosomal protein L7/L12"/>
    <property type="match status" value="1"/>
</dbReference>
<dbReference type="FunFam" id="3.30.1390.10:FF:000001">
    <property type="entry name" value="50S ribosomal protein L7/L12"/>
    <property type="match status" value="1"/>
</dbReference>
<dbReference type="Gene3D" id="3.30.1390.10">
    <property type="match status" value="1"/>
</dbReference>
<dbReference type="Gene3D" id="1.20.5.710">
    <property type="entry name" value="Single helix bin"/>
    <property type="match status" value="1"/>
</dbReference>
<dbReference type="HAMAP" id="MF_00368">
    <property type="entry name" value="Ribosomal_bL12"/>
    <property type="match status" value="1"/>
</dbReference>
<dbReference type="InterPro" id="IPR000206">
    <property type="entry name" value="Ribosomal_bL12"/>
</dbReference>
<dbReference type="InterPro" id="IPR013823">
    <property type="entry name" value="Ribosomal_bL12_C"/>
</dbReference>
<dbReference type="InterPro" id="IPR014719">
    <property type="entry name" value="Ribosomal_bL12_C/ClpS-like"/>
</dbReference>
<dbReference type="InterPro" id="IPR008932">
    <property type="entry name" value="Ribosomal_bL12_oligo"/>
</dbReference>
<dbReference type="InterPro" id="IPR036235">
    <property type="entry name" value="Ribosomal_bL12_oligo_N_sf"/>
</dbReference>
<dbReference type="NCBIfam" id="TIGR00855">
    <property type="entry name" value="L12"/>
    <property type="match status" value="1"/>
</dbReference>
<dbReference type="PANTHER" id="PTHR45987">
    <property type="entry name" value="39S RIBOSOMAL PROTEIN L12"/>
    <property type="match status" value="1"/>
</dbReference>
<dbReference type="PANTHER" id="PTHR45987:SF4">
    <property type="entry name" value="LARGE RIBOSOMAL SUBUNIT PROTEIN BL12M"/>
    <property type="match status" value="1"/>
</dbReference>
<dbReference type="Pfam" id="PF00542">
    <property type="entry name" value="Ribosomal_L12"/>
    <property type="match status" value="1"/>
</dbReference>
<dbReference type="Pfam" id="PF16320">
    <property type="entry name" value="Ribosomal_L12_N"/>
    <property type="match status" value="1"/>
</dbReference>
<dbReference type="SUPFAM" id="SSF54736">
    <property type="entry name" value="ClpS-like"/>
    <property type="match status" value="1"/>
</dbReference>
<dbReference type="SUPFAM" id="SSF48300">
    <property type="entry name" value="Ribosomal protein L7/12, oligomerisation (N-terminal) domain"/>
    <property type="match status" value="1"/>
</dbReference>
<gene>
    <name evidence="2" type="primary">rplL</name>
    <name type="ordered locus">NMA0143</name>
</gene>
<organism>
    <name type="scientific">Neisseria meningitidis serogroup A / serotype 4A (strain DSM 15465 / Z2491)</name>
    <dbReference type="NCBI Taxonomy" id="122587"/>
    <lineage>
        <taxon>Bacteria</taxon>
        <taxon>Pseudomonadati</taxon>
        <taxon>Pseudomonadota</taxon>
        <taxon>Betaproteobacteria</taxon>
        <taxon>Neisseriales</taxon>
        <taxon>Neisseriaceae</taxon>
        <taxon>Neisseria</taxon>
    </lineage>
</organism>
<reference key="1">
    <citation type="journal article" date="2000" name="Nature">
        <title>Complete DNA sequence of a serogroup A strain of Neisseria meningitidis Z2491.</title>
        <authorList>
            <person name="Parkhill J."/>
            <person name="Achtman M."/>
            <person name="James K.D."/>
            <person name="Bentley S.D."/>
            <person name="Churcher C.M."/>
            <person name="Klee S.R."/>
            <person name="Morelli G."/>
            <person name="Basham D."/>
            <person name="Brown D."/>
            <person name="Chillingworth T."/>
            <person name="Davies R.M."/>
            <person name="Davis P."/>
            <person name="Devlin K."/>
            <person name="Feltwell T."/>
            <person name="Hamlin N."/>
            <person name="Holroyd S."/>
            <person name="Jagels K."/>
            <person name="Leather S."/>
            <person name="Moule S."/>
            <person name="Mungall K.L."/>
            <person name="Quail M.A."/>
            <person name="Rajandream M.A."/>
            <person name="Rutherford K.M."/>
            <person name="Simmonds M."/>
            <person name="Skelton J."/>
            <person name="Whitehead S."/>
            <person name="Spratt B.G."/>
            <person name="Barrell B.G."/>
        </authorList>
    </citation>
    <scope>NUCLEOTIDE SEQUENCE [LARGE SCALE GENOMIC DNA]</scope>
    <source>
        <strain>DSM 15465 / Z2491</strain>
    </source>
</reference>